<name>TATA_RICRO</name>
<protein>
    <recommendedName>
        <fullName evidence="1">Sec-independent protein translocase protein TatA</fullName>
    </recommendedName>
</protein>
<comment type="function">
    <text evidence="1">Part of the twin-arginine translocation (Tat) system that transports large folded proteins containing a characteristic twin-arginine motif in their signal peptide across membranes. TatA could form the protein-conducting channel of the Tat system.</text>
</comment>
<comment type="subunit">
    <text evidence="1">The Tat system comprises two distinct complexes: a TatABC complex, containing multiple copies of TatA, TatB and TatC subunits, and a separate TatA complex, containing only TatA subunits. Substrates initially bind to the TatABC complex, which probably triggers association of the separate TatA complex to form the active translocon.</text>
</comment>
<comment type="subcellular location">
    <subcellularLocation>
        <location evidence="1">Cell inner membrane</location>
        <topology evidence="1">Single-pass membrane protein</topology>
    </subcellularLocation>
</comment>
<comment type="similarity">
    <text evidence="1">Belongs to the TatA/E family.</text>
</comment>
<reference key="1">
    <citation type="journal article" date="2008" name="Infect. Immun.">
        <title>Genomic comparison of virulent Rickettsia rickettsii Sheila Smith and avirulent Rickettsia rickettsii Iowa.</title>
        <authorList>
            <person name="Ellison D.W."/>
            <person name="Clark T.R."/>
            <person name="Sturdevant D.E."/>
            <person name="Virtaneva K."/>
            <person name="Porcella S.F."/>
            <person name="Hackstadt T."/>
        </authorList>
    </citation>
    <scope>NUCLEOTIDE SEQUENCE [LARGE SCALE GENOMIC DNA]</scope>
    <source>
        <strain>Iowa</strain>
    </source>
</reference>
<dbReference type="EMBL" id="CP000766">
    <property type="protein sequence ID" value="ABY73101.1"/>
    <property type="molecule type" value="Genomic_DNA"/>
</dbReference>
<dbReference type="RefSeq" id="WP_004997483.1">
    <property type="nucleotide sequence ID" value="NC_010263.3"/>
</dbReference>
<dbReference type="SMR" id="B0BV41"/>
<dbReference type="KEGG" id="rrj:RrIowa_1367"/>
<dbReference type="eggNOG" id="COG1826">
    <property type="taxonomic scope" value="Bacteria"/>
</dbReference>
<dbReference type="HOGENOM" id="CLU_086034_6_2_5"/>
<dbReference type="Proteomes" id="UP000000796">
    <property type="component" value="Chromosome"/>
</dbReference>
<dbReference type="GO" id="GO:0033281">
    <property type="term" value="C:TAT protein transport complex"/>
    <property type="evidence" value="ECO:0007669"/>
    <property type="project" value="UniProtKB-UniRule"/>
</dbReference>
<dbReference type="GO" id="GO:0008320">
    <property type="term" value="F:protein transmembrane transporter activity"/>
    <property type="evidence" value="ECO:0007669"/>
    <property type="project" value="UniProtKB-UniRule"/>
</dbReference>
<dbReference type="GO" id="GO:0043953">
    <property type="term" value="P:protein transport by the Tat complex"/>
    <property type="evidence" value="ECO:0007669"/>
    <property type="project" value="UniProtKB-UniRule"/>
</dbReference>
<dbReference type="Gene3D" id="1.20.5.3310">
    <property type="match status" value="1"/>
</dbReference>
<dbReference type="HAMAP" id="MF_00236">
    <property type="entry name" value="TatA_E"/>
    <property type="match status" value="1"/>
</dbReference>
<dbReference type="InterPro" id="IPR003369">
    <property type="entry name" value="TatA/B/E"/>
</dbReference>
<dbReference type="InterPro" id="IPR006312">
    <property type="entry name" value="TatA/E"/>
</dbReference>
<dbReference type="NCBIfam" id="NF002402">
    <property type="entry name" value="PRK01470.1"/>
    <property type="match status" value="1"/>
</dbReference>
<dbReference type="NCBIfam" id="TIGR01411">
    <property type="entry name" value="tatAE"/>
    <property type="match status" value="1"/>
</dbReference>
<dbReference type="PANTHER" id="PTHR42982">
    <property type="entry name" value="SEC-INDEPENDENT PROTEIN TRANSLOCASE PROTEIN TATA"/>
    <property type="match status" value="1"/>
</dbReference>
<dbReference type="PANTHER" id="PTHR42982:SF1">
    <property type="entry name" value="SEC-INDEPENDENT PROTEIN TRANSLOCASE PROTEIN TATA"/>
    <property type="match status" value="1"/>
</dbReference>
<dbReference type="Pfam" id="PF02416">
    <property type="entry name" value="TatA_B_E"/>
    <property type="match status" value="1"/>
</dbReference>
<feature type="chain" id="PRO_1000078314" description="Sec-independent protein translocase protein TatA">
    <location>
        <begin position="1"/>
        <end position="53"/>
    </location>
</feature>
<feature type="transmembrane region" description="Helical" evidence="1">
    <location>
        <begin position="1"/>
        <end position="21"/>
    </location>
</feature>
<sequence length="53" mass="5756">MGMSFSHLLIVLLIIFVLFGAGKLPQVMSDLAKGLKAFKDGMKDDGSDNDKNK</sequence>
<proteinExistence type="inferred from homology"/>
<accession>B0BV41</accession>
<organism>
    <name type="scientific">Rickettsia rickettsii (strain Iowa)</name>
    <dbReference type="NCBI Taxonomy" id="452659"/>
    <lineage>
        <taxon>Bacteria</taxon>
        <taxon>Pseudomonadati</taxon>
        <taxon>Pseudomonadota</taxon>
        <taxon>Alphaproteobacteria</taxon>
        <taxon>Rickettsiales</taxon>
        <taxon>Rickettsiaceae</taxon>
        <taxon>Rickettsieae</taxon>
        <taxon>Rickettsia</taxon>
        <taxon>spotted fever group</taxon>
    </lineage>
</organism>
<keyword id="KW-0997">Cell inner membrane</keyword>
<keyword id="KW-1003">Cell membrane</keyword>
<keyword id="KW-0472">Membrane</keyword>
<keyword id="KW-0653">Protein transport</keyword>
<keyword id="KW-0811">Translocation</keyword>
<keyword id="KW-0812">Transmembrane</keyword>
<keyword id="KW-1133">Transmembrane helix</keyword>
<keyword id="KW-0813">Transport</keyword>
<gene>
    <name evidence="1" type="primary">tatA</name>
    <name type="ordered locus">RrIowa_1367</name>
</gene>
<evidence type="ECO:0000255" key="1">
    <source>
        <dbReference type="HAMAP-Rule" id="MF_00236"/>
    </source>
</evidence>